<comment type="sequence caution" evidence="1">
    <conflict type="erroneous initiation">
        <sequence resource="EMBL-CDS" id="AAA22826"/>
    </conflict>
</comment>
<evidence type="ECO:0000305" key="1"/>
<dbReference type="EMBL" id="L77246">
    <property type="protein sequence ID" value="AAA96642.1"/>
    <property type="molecule type" value="Genomic_DNA"/>
</dbReference>
<dbReference type="EMBL" id="AL009126">
    <property type="protein sequence ID" value="CAB14092.1"/>
    <property type="molecule type" value="Genomic_DNA"/>
</dbReference>
<dbReference type="EMBL" id="M22910">
    <property type="protein sequence ID" value="AAA22826.1"/>
    <property type="status" value="ALT_INIT"/>
    <property type="molecule type" value="Genomic_DNA"/>
</dbReference>
<dbReference type="PIR" id="A69939">
    <property type="entry name" value="A69939"/>
</dbReference>
<dbReference type="RefSeq" id="NP_390057.1">
    <property type="nucleotide sequence ID" value="NC_000964.3"/>
</dbReference>
<dbReference type="RefSeq" id="WP_003245956.1">
    <property type="nucleotide sequence ID" value="NZ_OZ025638.1"/>
</dbReference>
<dbReference type="SMR" id="P40766"/>
<dbReference type="FunCoup" id="P40766">
    <property type="interactions" value="6"/>
</dbReference>
<dbReference type="STRING" id="224308.BSU21740"/>
<dbReference type="PaxDb" id="224308-BSU21740"/>
<dbReference type="DNASU" id="939097"/>
<dbReference type="EnsemblBacteria" id="CAB14092">
    <property type="protein sequence ID" value="CAB14092"/>
    <property type="gene ID" value="BSU_21740"/>
</dbReference>
<dbReference type="GeneID" id="939097"/>
<dbReference type="KEGG" id="bsu:BSU21740"/>
<dbReference type="PATRIC" id="fig|224308.179.peg.2375"/>
<dbReference type="eggNOG" id="COG2755">
    <property type="taxonomic scope" value="Bacteria"/>
</dbReference>
<dbReference type="InParanoid" id="P40766"/>
<dbReference type="OrthoDB" id="252349at2"/>
<dbReference type="PhylomeDB" id="P40766"/>
<dbReference type="BioCyc" id="BSUB:BSU21740-MONOMER"/>
<dbReference type="Proteomes" id="UP000001570">
    <property type="component" value="Chromosome"/>
</dbReference>
<dbReference type="GO" id="GO:0004622">
    <property type="term" value="F:lysophospholipase activity"/>
    <property type="evidence" value="ECO:0000318"/>
    <property type="project" value="GO_Central"/>
</dbReference>
<dbReference type="CDD" id="cd04506">
    <property type="entry name" value="SGNH_hydrolase_YpmR_like"/>
    <property type="match status" value="1"/>
</dbReference>
<dbReference type="Gene3D" id="3.40.50.1110">
    <property type="entry name" value="SGNH hydrolase"/>
    <property type="match status" value="1"/>
</dbReference>
<dbReference type="InterPro" id="IPR051532">
    <property type="entry name" value="Ester_Hydrolysis_Enzymes"/>
</dbReference>
<dbReference type="InterPro" id="IPR001087">
    <property type="entry name" value="GDSL"/>
</dbReference>
<dbReference type="InterPro" id="IPR036514">
    <property type="entry name" value="SGNH_hydro_sf"/>
</dbReference>
<dbReference type="PANTHER" id="PTHR30383:SF27">
    <property type="entry name" value="SPORE GERMINATION LIPASE LIPC"/>
    <property type="match status" value="1"/>
</dbReference>
<dbReference type="PANTHER" id="PTHR30383">
    <property type="entry name" value="THIOESTERASE 1/PROTEASE 1/LYSOPHOSPHOLIPASE L1"/>
    <property type="match status" value="1"/>
</dbReference>
<dbReference type="Pfam" id="PF00657">
    <property type="entry name" value="Lipase_GDSL"/>
    <property type="match status" value="1"/>
</dbReference>
<dbReference type="SUPFAM" id="SSF52266">
    <property type="entry name" value="SGNH hydrolase"/>
    <property type="match status" value="1"/>
</dbReference>
<dbReference type="PROSITE" id="PS51257">
    <property type="entry name" value="PROKAR_LIPOPROTEIN"/>
    <property type="match status" value="1"/>
</dbReference>
<reference key="1">
    <citation type="journal article" date="1996" name="Microbiology">
        <title>Organization of the Bacillus subtilis 168 chromosome between kdg and the attachment site of the SP beta prophage: use of long accurate PCR and yeast artificial chromosomes for sequencing.</title>
        <authorList>
            <person name="Capuano V."/>
            <person name="Galleron N."/>
            <person name="Pujic P."/>
            <person name="Sorokin A."/>
            <person name="Ehrlich S.D."/>
        </authorList>
    </citation>
    <scope>NUCLEOTIDE SEQUENCE [GENOMIC DNA]</scope>
    <source>
        <strain>168 / Marburg / ATCC 6051 / DSM 10 / JCM 1465 / NBRC 13719 / NCIMB 3610 / NRRL NRS-744 / VKM B-501</strain>
    </source>
</reference>
<reference key="2">
    <citation type="journal article" date="1997" name="Nature">
        <title>The complete genome sequence of the Gram-positive bacterium Bacillus subtilis.</title>
        <authorList>
            <person name="Kunst F."/>
            <person name="Ogasawara N."/>
            <person name="Moszer I."/>
            <person name="Albertini A.M."/>
            <person name="Alloni G."/>
            <person name="Azevedo V."/>
            <person name="Bertero M.G."/>
            <person name="Bessieres P."/>
            <person name="Bolotin A."/>
            <person name="Borchert S."/>
            <person name="Borriss R."/>
            <person name="Boursier L."/>
            <person name="Brans A."/>
            <person name="Braun M."/>
            <person name="Brignell S.C."/>
            <person name="Bron S."/>
            <person name="Brouillet S."/>
            <person name="Bruschi C.V."/>
            <person name="Caldwell B."/>
            <person name="Capuano V."/>
            <person name="Carter N.M."/>
            <person name="Choi S.-K."/>
            <person name="Codani J.-J."/>
            <person name="Connerton I.F."/>
            <person name="Cummings N.J."/>
            <person name="Daniel R.A."/>
            <person name="Denizot F."/>
            <person name="Devine K.M."/>
            <person name="Duesterhoeft A."/>
            <person name="Ehrlich S.D."/>
            <person name="Emmerson P.T."/>
            <person name="Entian K.-D."/>
            <person name="Errington J."/>
            <person name="Fabret C."/>
            <person name="Ferrari E."/>
            <person name="Foulger D."/>
            <person name="Fritz C."/>
            <person name="Fujita M."/>
            <person name="Fujita Y."/>
            <person name="Fuma S."/>
            <person name="Galizzi A."/>
            <person name="Galleron N."/>
            <person name="Ghim S.-Y."/>
            <person name="Glaser P."/>
            <person name="Goffeau A."/>
            <person name="Golightly E.J."/>
            <person name="Grandi G."/>
            <person name="Guiseppi G."/>
            <person name="Guy B.J."/>
            <person name="Haga K."/>
            <person name="Haiech J."/>
            <person name="Harwood C.R."/>
            <person name="Henaut A."/>
            <person name="Hilbert H."/>
            <person name="Holsappel S."/>
            <person name="Hosono S."/>
            <person name="Hullo M.-F."/>
            <person name="Itaya M."/>
            <person name="Jones L.-M."/>
            <person name="Joris B."/>
            <person name="Karamata D."/>
            <person name="Kasahara Y."/>
            <person name="Klaerr-Blanchard M."/>
            <person name="Klein C."/>
            <person name="Kobayashi Y."/>
            <person name="Koetter P."/>
            <person name="Koningstein G."/>
            <person name="Krogh S."/>
            <person name="Kumano M."/>
            <person name="Kurita K."/>
            <person name="Lapidus A."/>
            <person name="Lardinois S."/>
            <person name="Lauber J."/>
            <person name="Lazarevic V."/>
            <person name="Lee S.-M."/>
            <person name="Levine A."/>
            <person name="Liu H."/>
            <person name="Masuda S."/>
            <person name="Mauel C."/>
            <person name="Medigue C."/>
            <person name="Medina N."/>
            <person name="Mellado R.P."/>
            <person name="Mizuno M."/>
            <person name="Moestl D."/>
            <person name="Nakai S."/>
            <person name="Noback M."/>
            <person name="Noone D."/>
            <person name="O'Reilly M."/>
            <person name="Ogawa K."/>
            <person name="Ogiwara A."/>
            <person name="Oudega B."/>
            <person name="Park S.-H."/>
            <person name="Parro V."/>
            <person name="Pohl T.M."/>
            <person name="Portetelle D."/>
            <person name="Porwollik S."/>
            <person name="Prescott A.M."/>
            <person name="Presecan E."/>
            <person name="Pujic P."/>
            <person name="Purnelle B."/>
            <person name="Rapoport G."/>
            <person name="Rey M."/>
            <person name="Reynolds S."/>
            <person name="Rieger M."/>
            <person name="Rivolta C."/>
            <person name="Rocha E."/>
            <person name="Roche B."/>
            <person name="Rose M."/>
            <person name="Sadaie Y."/>
            <person name="Sato T."/>
            <person name="Scanlan E."/>
            <person name="Schleich S."/>
            <person name="Schroeter R."/>
            <person name="Scoffone F."/>
            <person name="Sekiguchi J."/>
            <person name="Sekowska A."/>
            <person name="Seror S.J."/>
            <person name="Serror P."/>
            <person name="Shin B.-S."/>
            <person name="Soldo B."/>
            <person name="Sorokin A."/>
            <person name="Tacconi E."/>
            <person name="Takagi T."/>
            <person name="Takahashi H."/>
            <person name="Takemaru K."/>
            <person name="Takeuchi M."/>
            <person name="Tamakoshi A."/>
            <person name="Tanaka T."/>
            <person name="Terpstra P."/>
            <person name="Tognoni A."/>
            <person name="Tosato V."/>
            <person name="Uchiyama S."/>
            <person name="Vandenbol M."/>
            <person name="Vannier F."/>
            <person name="Vassarotti A."/>
            <person name="Viari A."/>
            <person name="Wambutt R."/>
            <person name="Wedler E."/>
            <person name="Wedler H."/>
            <person name="Weitzenegger T."/>
            <person name="Winters P."/>
            <person name="Wipat A."/>
            <person name="Yamamoto H."/>
            <person name="Yamane K."/>
            <person name="Yasumoto K."/>
            <person name="Yata K."/>
            <person name="Yoshida K."/>
            <person name="Yoshikawa H.-F."/>
            <person name="Zumstein E."/>
            <person name="Yoshikawa H."/>
            <person name="Danchin A."/>
        </authorList>
    </citation>
    <scope>NUCLEOTIDE SEQUENCE [LARGE SCALE GENOMIC DNA]</scope>
    <source>
        <strain>168</strain>
    </source>
</reference>
<reference key="3">
    <citation type="journal article" date="1988" name="Gene">
        <title>Characterization of signal-sequence-coding regions selected from the Bacillus subtilis chromosome.</title>
        <authorList>
            <person name="Smith H."/>
            <person name="de Jong A."/>
            <person name="Bron S."/>
            <person name="Venema G."/>
        </authorList>
    </citation>
    <scope>NUCLEOTIDE SEQUENCE [GENOMIC DNA] OF 1-76</scope>
</reference>
<protein>
    <recommendedName>
        <fullName>Uncharacterized protein YpmR</fullName>
    </recommendedName>
</protein>
<feature type="chain" id="PRO_0000049712" description="Uncharacterized protein YpmR">
    <location>
        <begin position="1"/>
        <end position="255"/>
    </location>
</feature>
<feature type="sequence conflict" description="In Ref. 3." evidence="1" ref="3">
    <original>PDGKGYVGKVADSIRSDKQV</original>
    <variation>QLGARVGYIELDPLESTAQA</variation>
    <location>
        <begin position="57"/>
        <end position="76"/>
    </location>
</feature>
<accession>P40766</accession>
<keyword id="KW-1185">Reference proteome</keyword>
<name>YPMR_BACSU</name>
<organism>
    <name type="scientific">Bacillus subtilis (strain 168)</name>
    <dbReference type="NCBI Taxonomy" id="224308"/>
    <lineage>
        <taxon>Bacteria</taxon>
        <taxon>Bacillati</taxon>
        <taxon>Bacillota</taxon>
        <taxon>Bacilli</taxon>
        <taxon>Bacillales</taxon>
        <taxon>Bacillaceae</taxon>
        <taxon>Bacillus</taxon>
    </lineage>
</organism>
<sequence length="255" mass="28922">MKLRIFSIMASLILLLTACTSIRTSSEGKQKAHETKTKEHIVIAAVGDSLTEGVGDPDGKGYVGKVADSIRSDKQVKTVDVKNYAVKGNRSDDLLEKLKDKKVQKGIKDADYVFFTIGGNDLMKILRQNFLQLTVEPFQEAEKPYEKRFEKIISEIRELNDHAELIYVSMYNPFTFTLSELNEINGVVTDWNHIAEKELKKDKHAKIVHIEDLFNQKSDSSRISEEDDFHPNGTGYSLIAKRVYQAIKKEGLPKE</sequence>
<gene>
    <name type="primary">ypmR</name>
    <name type="synonym">yzjA</name>
    <name type="ordered locus">BSU21740</name>
</gene>
<proteinExistence type="predicted"/>